<gene>
    <name evidence="6" type="primary">OVA1</name>
    <name evidence="9" type="ordered locus">At3g55400</name>
    <name evidence="10" type="ORF">T22E16.60</name>
</gene>
<organism>
    <name type="scientific">Arabidopsis thaliana</name>
    <name type="common">Mouse-ear cress</name>
    <dbReference type="NCBI Taxonomy" id="3702"/>
    <lineage>
        <taxon>Eukaryota</taxon>
        <taxon>Viridiplantae</taxon>
        <taxon>Streptophyta</taxon>
        <taxon>Embryophyta</taxon>
        <taxon>Tracheophyta</taxon>
        <taxon>Spermatophyta</taxon>
        <taxon>Magnoliopsida</taxon>
        <taxon>eudicotyledons</taxon>
        <taxon>Gunneridae</taxon>
        <taxon>Pentapetalae</taxon>
        <taxon>rosids</taxon>
        <taxon>malvids</taxon>
        <taxon>Brassicales</taxon>
        <taxon>Brassicaceae</taxon>
        <taxon>Camelineae</taxon>
        <taxon>Arabidopsis</taxon>
    </lineage>
</organism>
<comment type="catalytic activity">
    <reaction evidence="8">
        <text>tRNA(Met) + L-methionine + ATP = L-methionyl-tRNA(Met) + AMP + diphosphate</text>
        <dbReference type="Rhea" id="RHEA:13481"/>
        <dbReference type="Rhea" id="RHEA-COMP:9667"/>
        <dbReference type="Rhea" id="RHEA-COMP:9698"/>
        <dbReference type="ChEBI" id="CHEBI:30616"/>
        <dbReference type="ChEBI" id="CHEBI:33019"/>
        <dbReference type="ChEBI" id="CHEBI:57844"/>
        <dbReference type="ChEBI" id="CHEBI:78442"/>
        <dbReference type="ChEBI" id="CHEBI:78530"/>
        <dbReference type="ChEBI" id="CHEBI:456215"/>
        <dbReference type="EC" id="6.1.1.10"/>
    </reaction>
</comment>
<comment type="subcellular location">
    <subcellularLocation>
        <location evidence="4 5">Plastid</location>
        <location evidence="4 5">Chloroplast</location>
    </subcellularLocation>
    <subcellularLocation>
        <location evidence="4 5">Mitochondrion</location>
    </subcellularLocation>
</comment>
<comment type="alternative products">
    <event type="alternative splicing"/>
    <isoform>
        <id>Q9M2T9-1</id>
        <name>1</name>
        <sequence type="displayed"/>
    </isoform>
    <text evidence="8">A number of isoforms are produced. According EST sequences.</text>
</comment>
<comment type="disruption phenotype">
    <text evidence="3">Lethal. In heterozygous plants, aborted ovules.</text>
</comment>
<comment type="similarity">
    <text evidence="8">Belongs to the class-I aminoacyl-tRNA synthetase family.</text>
</comment>
<evidence type="ECO:0000250" key="1"/>
<evidence type="ECO:0000256" key="2">
    <source>
        <dbReference type="SAM" id="MobiDB-lite"/>
    </source>
</evidence>
<evidence type="ECO:0000269" key="3">
    <source>
    </source>
</evidence>
<evidence type="ECO:0000269" key="4">
    <source>
    </source>
</evidence>
<evidence type="ECO:0000269" key="5">
    <source>
    </source>
</evidence>
<evidence type="ECO:0000303" key="6">
    <source>
    </source>
</evidence>
<evidence type="ECO:0000303" key="7">
    <source>
    </source>
</evidence>
<evidence type="ECO:0000305" key="8"/>
<evidence type="ECO:0000312" key="9">
    <source>
        <dbReference type="Araport" id="AT3G55400"/>
    </source>
</evidence>
<evidence type="ECO:0000312" key="10">
    <source>
        <dbReference type="EMBL" id="CAB75898.1"/>
    </source>
</evidence>
<protein>
    <recommendedName>
        <fullName evidence="8">Methionine--tRNA ligase, chloroplastic/mitochondrial</fullName>
        <ecNumber evidence="8">6.1.1.10</ecNumber>
    </recommendedName>
    <alternativeName>
        <fullName evidence="8">Methionyl-tRNA synthetase</fullName>
        <shortName evidence="7">AtcpMetRS</shortName>
        <shortName evidence="8">MetRS</shortName>
    </alternativeName>
    <alternativeName>
        <fullName evidence="6">Protein OVULE ABORTION 1</fullName>
    </alternativeName>
</protein>
<proteinExistence type="evidence at transcript level"/>
<reference key="1">
    <citation type="journal article" date="1998" name="Proc. Natl. Acad. Sci. U.S.A.">
        <title>A single gene of chloroplast origin codes for mitochondrial and chloroplastic methionyl-tRNA synthetase in Arabidopsis thaliana.</title>
        <authorList>
            <person name="Menand B."/>
            <person name="Marechal-Drouard L."/>
            <person name="Sakamoto W."/>
            <person name="Dietrich A."/>
            <person name="Wintz H."/>
        </authorList>
    </citation>
    <scope>NUCLEOTIDE SEQUENCE [MRNA]</scope>
    <scope>SUBCELLULAR LOCATION</scope>
    <source>
        <strain>cv. Columbia</strain>
    </source>
</reference>
<reference key="2">
    <citation type="journal article" date="2000" name="Nature">
        <title>Sequence and analysis of chromosome 3 of the plant Arabidopsis thaliana.</title>
        <authorList>
            <person name="Salanoubat M."/>
            <person name="Lemcke K."/>
            <person name="Rieger M."/>
            <person name="Ansorge W."/>
            <person name="Unseld M."/>
            <person name="Fartmann B."/>
            <person name="Valle G."/>
            <person name="Bloecker H."/>
            <person name="Perez-Alonso M."/>
            <person name="Obermaier B."/>
            <person name="Delseny M."/>
            <person name="Boutry M."/>
            <person name="Grivell L.A."/>
            <person name="Mache R."/>
            <person name="Puigdomenech P."/>
            <person name="De Simone V."/>
            <person name="Choisne N."/>
            <person name="Artiguenave F."/>
            <person name="Robert C."/>
            <person name="Brottier P."/>
            <person name="Wincker P."/>
            <person name="Cattolico L."/>
            <person name="Weissenbach J."/>
            <person name="Saurin W."/>
            <person name="Quetier F."/>
            <person name="Schaefer M."/>
            <person name="Mueller-Auer S."/>
            <person name="Gabel C."/>
            <person name="Fuchs M."/>
            <person name="Benes V."/>
            <person name="Wurmbach E."/>
            <person name="Drzonek H."/>
            <person name="Erfle H."/>
            <person name="Jordan N."/>
            <person name="Bangert S."/>
            <person name="Wiedelmann R."/>
            <person name="Kranz H."/>
            <person name="Voss H."/>
            <person name="Holland R."/>
            <person name="Brandt P."/>
            <person name="Nyakatura G."/>
            <person name="Vezzi A."/>
            <person name="D'Angelo M."/>
            <person name="Pallavicini A."/>
            <person name="Toppo S."/>
            <person name="Simionati B."/>
            <person name="Conrad A."/>
            <person name="Hornischer K."/>
            <person name="Kauer G."/>
            <person name="Loehnert T.-H."/>
            <person name="Nordsiek G."/>
            <person name="Reichelt J."/>
            <person name="Scharfe M."/>
            <person name="Schoen O."/>
            <person name="Bargues M."/>
            <person name="Terol J."/>
            <person name="Climent J."/>
            <person name="Navarro P."/>
            <person name="Collado C."/>
            <person name="Perez-Perez A."/>
            <person name="Ottenwaelder B."/>
            <person name="Duchemin D."/>
            <person name="Cooke R."/>
            <person name="Laudie M."/>
            <person name="Berger-Llauro C."/>
            <person name="Purnelle B."/>
            <person name="Masuy D."/>
            <person name="de Haan M."/>
            <person name="Maarse A.C."/>
            <person name="Alcaraz J.-P."/>
            <person name="Cottet A."/>
            <person name="Casacuberta E."/>
            <person name="Monfort A."/>
            <person name="Argiriou A."/>
            <person name="Flores M."/>
            <person name="Liguori R."/>
            <person name="Vitale D."/>
            <person name="Mannhaupt G."/>
            <person name="Haase D."/>
            <person name="Schoof H."/>
            <person name="Rudd S."/>
            <person name="Zaccaria P."/>
            <person name="Mewes H.-W."/>
            <person name="Mayer K.F.X."/>
            <person name="Kaul S."/>
            <person name="Town C.D."/>
            <person name="Koo H.L."/>
            <person name="Tallon L.J."/>
            <person name="Jenkins J."/>
            <person name="Rooney T."/>
            <person name="Rizzo M."/>
            <person name="Walts A."/>
            <person name="Utterback T."/>
            <person name="Fujii C.Y."/>
            <person name="Shea T.P."/>
            <person name="Creasy T.H."/>
            <person name="Haas B."/>
            <person name="Maiti R."/>
            <person name="Wu D."/>
            <person name="Peterson J."/>
            <person name="Van Aken S."/>
            <person name="Pai G."/>
            <person name="Militscher J."/>
            <person name="Sellers P."/>
            <person name="Gill J.E."/>
            <person name="Feldblyum T.V."/>
            <person name="Preuss D."/>
            <person name="Lin X."/>
            <person name="Nierman W.C."/>
            <person name="Salzberg S.L."/>
            <person name="White O."/>
            <person name="Venter J.C."/>
            <person name="Fraser C.M."/>
            <person name="Kaneko T."/>
            <person name="Nakamura Y."/>
            <person name="Sato S."/>
            <person name="Kato T."/>
            <person name="Asamizu E."/>
            <person name="Sasamoto S."/>
            <person name="Kimura T."/>
            <person name="Idesawa K."/>
            <person name="Kawashima K."/>
            <person name="Kishida Y."/>
            <person name="Kiyokawa C."/>
            <person name="Kohara M."/>
            <person name="Matsumoto M."/>
            <person name="Matsuno A."/>
            <person name="Muraki A."/>
            <person name="Nakayama S."/>
            <person name="Nakazaki N."/>
            <person name="Shinpo S."/>
            <person name="Takeuchi C."/>
            <person name="Wada T."/>
            <person name="Watanabe A."/>
            <person name="Yamada M."/>
            <person name="Yasuda M."/>
            <person name="Tabata S."/>
        </authorList>
    </citation>
    <scope>NUCLEOTIDE SEQUENCE [LARGE SCALE GENOMIC DNA]</scope>
    <source>
        <strain>cv. Columbia</strain>
    </source>
</reference>
<reference key="3">
    <citation type="journal article" date="2017" name="Plant J.">
        <title>Araport11: a complete reannotation of the Arabidopsis thaliana reference genome.</title>
        <authorList>
            <person name="Cheng C.Y."/>
            <person name="Krishnakumar V."/>
            <person name="Chan A.P."/>
            <person name="Thibaud-Nissen F."/>
            <person name="Schobel S."/>
            <person name="Town C.D."/>
        </authorList>
    </citation>
    <scope>GENOME REANNOTATION</scope>
    <source>
        <strain>cv. Columbia</strain>
    </source>
</reference>
<reference key="4">
    <citation type="journal article" date="2003" name="Science">
        <title>Empirical analysis of transcriptional activity in the Arabidopsis genome.</title>
        <authorList>
            <person name="Yamada K."/>
            <person name="Lim J."/>
            <person name="Dale J.M."/>
            <person name="Chen H."/>
            <person name="Shinn P."/>
            <person name="Palm C.J."/>
            <person name="Southwick A.M."/>
            <person name="Wu H.C."/>
            <person name="Kim C.J."/>
            <person name="Nguyen M."/>
            <person name="Pham P.K."/>
            <person name="Cheuk R.F."/>
            <person name="Karlin-Newmann G."/>
            <person name="Liu S.X."/>
            <person name="Lam B."/>
            <person name="Sakano H."/>
            <person name="Wu T."/>
            <person name="Yu G."/>
            <person name="Miranda M."/>
            <person name="Quach H.L."/>
            <person name="Tripp M."/>
            <person name="Chang C.H."/>
            <person name="Lee J.M."/>
            <person name="Toriumi M.J."/>
            <person name="Chan M.M."/>
            <person name="Tang C.C."/>
            <person name="Onodera C.S."/>
            <person name="Deng J.M."/>
            <person name="Akiyama K."/>
            <person name="Ansari Y."/>
            <person name="Arakawa T."/>
            <person name="Banh J."/>
            <person name="Banno F."/>
            <person name="Bowser L."/>
            <person name="Brooks S.Y."/>
            <person name="Carninci P."/>
            <person name="Chao Q."/>
            <person name="Choy N."/>
            <person name="Enju A."/>
            <person name="Goldsmith A.D."/>
            <person name="Gurjal M."/>
            <person name="Hansen N.F."/>
            <person name="Hayashizaki Y."/>
            <person name="Johnson-Hopson C."/>
            <person name="Hsuan V.W."/>
            <person name="Iida K."/>
            <person name="Karnes M."/>
            <person name="Khan S."/>
            <person name="Koesema E."/>
            <person name="Ishida J."/>
            <person name="Jiang P.X."/>
            <person name="Jones T."/>
            <person name="Kawai J."/>
            <person name="Kamiya A."/>
            <person name="Meyers C."/>
            <person name="Nakajima M."/>
            <person name="Narusaka M."/>
            <person name="Seki M."/>
            <person name="Sakurai T."/>
            <person name="Satou M."/>
            <person name="Tamse R."/>
            <person name="Vaysberg M."/>
            <person name="Wallender E.K."/>
            <person name="Wong C."/>
            <person name="Yamamura Y."/>
            <person name="Yuan S."/>
            <person name="Shinozaki K."/>
            <person name="Davis R.W."/>
            <person name="Theologis A."/>
            <person name="Ecker J.R."/>
        </authorList>
    </citation>
    <scope>NUCLEOTIDE SEQUENCE [LARGE SCALE MRNA]</scope>
    <source>
        <strain>cv. Columbia</strain>
    </source>
</reference>
<reference key="5">
    <citation type="journal article" date="2005" name="Plant J.">
        <title>Requirement of aminoacyl-tRNA synthetases for gametogenesis and embryo development in Arabidopsis.</title>
        <authorList>
            <person name="Berg M."/>
            <person name="Rogers R."/>
            <person name="Muralla R."/>
            <person name="Meinke D."/>
        </authorList>
    </citation>
    <scope>DISRUPTION PHENOTYPE</scope>
</reference>
<reference key="6">
    <citation type="journal article" date="2007" name="J. Mol. Biol.">
        <title>How can organellar protein N-terminal sequences be dual targeting signals? In silico analysis and mutagenesis approach.</title>
        <authorList>
            <person name="Pujol C."/>
            <person name="Marechal-Drouard L."/>
            <person name="Duchene A.M."/>
        </authorList>
    </citation>
    <scope>SUBCELLULAR LOCATION</scope>
</reference>
<accession>Q9M2T9</accession>
<accession>O23761</accession>
<accession>Q9ASP8</accession>
<keyword id="KW-0025">Alternative splicing</keyword>
<keyword id="KW-0030">Aminoacyl-tRNA synthetase</keyword>
<keyword id="KW-0067">ATP-binding</keyword>
<keyword id="KW-0150">Chloroplast</keyword>
<keyword id="KW-0436">Ligase</keyword>
<keyword id="KW-0496">Mitochondrion</keyword>
<keyword id="KW-0547">Nucleotide-binding</keyword>
<keyword id="KW-0934">Plastid</keyword>
<keyword id="KW-0648">Protein biosynthesis</keyword>
<keyword id="KW-1185">Reference proteome</keyword>
<keyword id="KW-0809">Transit peptide</keyword>
<dbReference type="EC" id="6.1.1.10" evidence="8"/>
<dbReference type="EMBL" id="Y13943">
    <property type="protein sequence ID" value="CAA74281.1"/>
    <property type="molecule type" value="mRNA"/>
</dbReference>
<dbReference type="EMBL" id="AL132975">
    <property type="protein sequence ID" value="CAB75898.1"/>
    <property type="molecule type" value="Genomic_DNA"/>
</dbReference>
<dbReference type="EMBL" id="CP002686">
    <property type="protein sequence ID" value="AEE79379.1"/>
    <property type="molecule type" value="Genomic_DNA"/>
</dbReference>
<dbReference type="EMBL" id="AF367354">
    <property type="protein sequence ID" value="AAK32940.1"/>
    <property type="molecule type" value="mRNA"/>
</dbReference>
<dbReference type="EMBL" id="AY133597">
    <property type="protein sequence ID" value="AAM91427.1"/>
    <property type="molecule type" value="mRNA"/>
</dbReference>
<dbReference type="PIR" id="T47679">
    <property type="entry name" value="T47679"/>
</dbReference>
<dbReference type="PIR" id="T50641">
    <property type="entry name" value="T50641"/>
</dbReference>
<dbReference type="RefSeq" id="NP_191100.1">
    <molecule id="Q9M2T9-1"/>
    <property type="nucleotide sequence ID" value="NM_115398.3"/>
</dbReference>
<dbReference type="SMR" id="Q9M2T9"/>
<dbReference type="FunCoup" id="Q9M2T9">
    <property type="interactions" value="2970"/>
</dbReference>
<dbReference type="STRING" id="3702.Q9M2T9"/>
<dbReference type="PaxDb" id="3702-AT3G55400.1"/>
<dbReference type="ProteomicsDB" id="234126">
    <molecule id="Q9M2T9-1"/>
</dbReference>
<dbReference type="EnsemblPlants" id="AT3G55400.1">
    <molecule id="Q9M2T9-1"/>
    <property type="protein sequence ID" value="AT3G55400.1"/>
    <property type="gene ID" value="AT3G55400"/>
</dbReference>
<dbReference type="GeneID" id="824706"/>
<dbReference type="Gramene" id="AT3G55400.1">
    <molecule id="Q9M2T9-1"/>
    <property type="protein sequence ID" value="AT3G55400.1"/>
    <property type="gene ID" value="AT3G55400"/>
</dbReference>
<dbReference type="KEGG" id="ath:AT3G55400"/>
<dbReference type="Araport" id="AT3G55400"/>
<dbReference type="TAIR" id="AT3G55400">
    <property type="gene designation" value="OVA1"/>
</dbReference>
<dbReference type="eggNOG" id="KOG0436">
    <property type="taxonomic scope" value="Eukaryota"/>
</dbReference>
<dbReference type="InParanoid" id="Q9M2T9"/>
<dbReference type="OMA" id="NMFLPDR"/>
<dbReference type="PhylomeDB" id="Q9M2T9"/>
<dbReference type="BRENDA" id="6.1.1.10">
    <property type="organism ID" value="399"/>
</dbReference>
<dbReference type="PRO" id="PR:Q9M2T9"/>
<dbReference type="Proteomes" id="UP000006548">
    <property type="component" value="Chromosome 3"/>
</dbReference>
<dbReference type="ExpressionAtlas" id="Q9M2T9">
    <property type="expression patterns" value="baseline and differential"/>
</dbReference>
<dbReference type="GO" id="GO:0009507">
    <property type="term" value="C:chloroplast"/>
    <property type="evidence" value="ECO:0000314"/>
    <property type="project" value="TAIR"/>
</dbReference>
<dbReference type="GO" id="GO:0009570">
    <property type="term" value="C:chloroplast stroma"/>
    <property type="evidence" value="ECO:0007005"/>
    <property type="project" value="TAIR"/>
</dbReference>
<dbReference type="GO" id="GO:0005739">
    <property type="term" value="C:mitochondrion"/>
    <property type="evidence" value="ECO:0000314"/>
    <property type="project" value="TAIR"/>
</dbReference>
<dbReference type="GO" id="GO:0005524">
    <property type="term" value="F:ATP binding"/>
    <property type="evidence" value="ECO:0007669"/>
    <property type="project" value="UniProtKB-KW"/>
</dbReference>
<dbReference type="GO" id="GO:0004825">
    <property type="term" value="F:methionine-tRNA ligase activity"/>
    <property type="evidence" value="ECO:0000314"/>
    <property type="project" value="TAIR"/>
</dbReference>
<dbReference type="GO" id="GO:0006431">
    <property type="term" value="P:methionyl-tRNA aminoacylation"/>
    <property type="evidence" value="ECO:0007669"/>
    <property type="project" value="InterPro"/>
</dbReference>
<dbReference type="GO" id="GO:0048481">
    <property type="term" value="P:plant ovule development"/>
    <property type="evidence" value="ECO:0000315"/>
    <property type="project" value="TAIR"/>
</dbReference>
<dbReference type="CDD" id="cd07957">
    <property type="entry name" value="Anticodon_Ia_Met"/>
    <property type="match status" value="1"/>
</dbReference>
<dbReference type="CDD" id="cd00814">
    <property type="entry name" value="MetRS_core"/>
    <property type="match status" value="1"/>
</dbReference>
<dbReference type="FunFam" id="1.10.730.10:FF:000028">
    <property type="entry name" value="Methionine--tRNA ligase, chloroplastic/mitochondrial"/>
    <property type="match status" value="1"/>
</dbReference>
<dbReference type="FunFam" id="2.170.220.10:FF:000001">
    <property type="entry name" value="methionine--tRNA ligase, mitochondrial"/>
    <property type="match status" value="1"/>
</dbReference>
<dbReference type="Gene3D" id="2.170.220.10">
    <property type="match status" value="1"/>
</dbReference>
<dbReference type="Gene3D" id="3.40.50.620">
    <property type="entry name" value="HUPs"/>
    <property type="match status" value="1"/>
</dbReference>
<dbReference type="Gene3D" id="1.10.730.10">
    <property type="entry name" value="Isoleucyl-tRNA Synthetase, Domain 1"/>
    <property type="match status" value="1"/>
</dbReference>
<dbReference type="HAMAP" id="MF_01228">
    <property type="entry name" value="Met_tRNA_synth_type2"/>
    <property type="match status" value="1"/>
</dbReference>
<dbReference type="InterPro" id="IPR041872">
    <property type="entry name" value="Anticodon_Met"/>
</dbReference>
<dbReference type="InterPro" id="IPR014758">
    <property type="entry name" value="Met-tRNA_synth"/>
</dbReference>
<dbReference type="InterPro" id="IPR023457">
    <property type="entry name" value="Met-tRNA_synth_2"/>
</dbReference>
<dbReference type="InterPro" id="IPR015413">
    <property type="entry name" value="Methionyl/Leucyl_tRNA_Synth"/>
</dbReference>
<dbReference type="InterPro" id="IPR033911">
    <property type="entry name" value="MetRS_core"/>
</dbReference>
<dbReference type="InterPro" id="IPR014729">
    <property type="entry name" value="Rossmann-like_a/b/a_fold"/>
</dbReference>
<dbReference type="InterPro" id="IPR009080">
    <property type="entry name" value="tRNAsynth_Ia_anticodon-bd"/>
</dbReference>
<dbReference type="NCBIfam" id="TIGR00398">
    <property type="entry name" value="metG"/>
    <property type="match status" value="1"/>
</dbReference>
<dbReference type="NCBIfam" id="NF008900">
    <property type="entry name" value="PRK12267.1"/>
    <property type="match status" value="1"/>
</dbReference>
<dbReference type="PANTHER" id="PTHR43326:SF1">
    <property type="entry name" value="METHIONINE--TRNA LIGASE, MITOCHONDRIAL"/>
    <property type="match status" value="1"/>
</dbReference>
<dbReference type="PANTHER" id="PTHR43326">
    <property type="entry name" value="METHIONYL-TRNA SYNTHETASE"/>
    <property type="match status" value="1"/>
</dbReference>
<dbReference type="Pfam" id="PF19303">
    <property type="entry name" value="Anticodon_3"/>
    <property type="match status" value="1"/>
</dbReference>
<dbReference type="Pfam" id="PF09334">
    <property type="entry name" value="tRNA-synt_1g"/>
    <property type="match status" value="1"/>
</dbReference>
<dbReference type="PRINTS" id="PR01041">
    <property type="entry name" value="TRNASYNTHMET"/>
</dbReference>
<dbReference type="SUPFAM" id="SSF47323">
    <property type="entry name" value="Anticodon-binding domain of a subclass of class I aminoacyl-tRNA synthetases"/>
    <property type="match status" value="1"/>
</dbReference>
<dbReference type="SUPFAM" id="SSF52374">
    <property type="entry name" value="Nucleotidylyl transferase"/>
    <property type="match status" value="1"/>
</dbReference>
<name>SYMM_ARATH</name>
<feature type="transit peptide" description="Chloroplast and mitochondrion" evidence="8">
    <location>
        <begin position="1"/>
        <end status="unknown"/>
    </location>
</feature>
<feature type="chain" id="PRO_0000433535" description="Methionine--tRNA ligase, chloroplastic/mitochondrial" evidence="8">
    <location>
        <begin status="unknown"/>
        <end position="616"/>
    </location>
</feature>
<feature type="region of interest" description="Disordered" evidence="2">
    <location>
        <begin position="582"/>
        <end position="602"/>
    </location>
</feature>
<feature type="short sequence motif" description="'HIGH' region" evidence="8">
    <location>
        <begin position="78"/>
        <end position="88"/>
    </location>
</feature>
<feature type="short sequence motif" description="'KMSKS' region" evidence="8">
    <location>
        <begin position="366"/>
        <end position="370"/>
    </location>
</feature>
<feature type="compositionally biased region" description="Basic and acidic residues" evidence="2">
    <location>
        <begin position="582"/>
        <end position="593"/>
    </location>
</feature>
<feature type="binding site" evidence="1">
    <location>
        <position position="369"/>
    </location>
    <ligand>
        <name>ATP</name>
        <dbReference type="ChEBI" id="CHEBI:30616"/>
    </ligand>
</feature>
<feature type="sequence conflict" description="In Ref. 1; CAA74281." evidence="8" ref="1">
    <original>A</original>
    <variation>S</variation>
    <location>
        <position position="99"/>
    </location>
</feature>
<feature type="sequence conflict" description="In Ref. 4; AAK32940/AAM91427." evidence="8" ref="4">
    <original>E</original>
    <variation>G</variation>
    <location>
        <position position="204"/>
    </location>
</feature>
<feature type="sequence conflict" description="In Ref. 1; CAA74281." evidence="8" ref="1">
    <original>M</original>
    <variation>I</variation>
    <location>
        <position position="344"/>
    </location>
</feature>
<feature type="sequence conflict" description="In Ref. 1; CAA74281." evidence="8" ref="1">
    <original>I</original>
    <variation>V</variation>
    <location>
        <position position="540"/>
    </location>
</feature>
<feature type="sequence conflict" description="In Ref. 1; CAA74281." evidence="8" ref="1">
    <original>T</original>
    <variation>S</variation>
    <location>
        <position position="547"/>
    </location>
</feature>
<sequence length="616" mass="69274">MAARINTSLHNALSFLKPFNTPLNTKPFSFRRNSFRFSKKLPYYSQFSSGKRALYCTSSSQESTVDEGETFVLTTPLYYVNAPPHMGSAYTTIAADSIARFQRLLGKKVIFITGTDEHGEKIATSAAANGRNPPEHCDLISQSYRTLWKDLDIAYDKFIRTTDPKHEAIVKEFYARVFANGDIYRADYEGLYCVNCEEYKDEKELLENNCCPVHQMPCVARKEDNYFFALSKYQKPLEDILAQNPRFVQPSYRLNEVQSWIKSGLRDFSISRALVDWGIPVPDDDKQTIYVWFDALLGYISALTEDNKQQNLETAVSFGWPASLHLIGKDILRFHAVYWPAMLMSAGLELPKMVFGHGFLTKDGMKMGKSLGNTLEPFELVQKFGPDAVRYFFLREVEFGNDGDYSEDRFIKIVNAHLANTIGNLLNRTLGLLKKNCESTLVVDSTVAAEGVPLKDTVEKLVEKARTNYENLSLSSACEAVLEIGNAGNTYMDQRAPWFLFKQGGVSAEEAAKDLVIILEVMRVIAVALSPVAPCLSLRIYSQLGYTEDQFNSITWSDTKWGGLKGGQVMEQASPVFARIELNPEKEEDEKKPKVGKKTGKAKVKVVEQTPTVAEA</sequence>